<organism>
    <name type="scientific">Wolinella succinogenes (strain ATCC 29543 / DSM 1740 / CCUG 13145 / JCM 31913 / LMG 7466 / NCTC 11488 / FDC 602W)</name>
    <name type="common">Vibrio succinogenes</name>
    <dbReference type="NCBI Taxonomy" id="273121"/>
    <lineage>
        <taxon>Bacteria</taxon>
        <taxon>Pseudomonadati</taxon>
        <taxon>Campylobacterota</taxon>
        <taxon>Epsilonproteobacteria</taxon>
        <taxon>Campylobacterales</taxon>
        <taxon>Helicobacteraceae</taxon>
        <taxon>Wolinella</taxon>
    </lineage>
</organism>
<reference key="1">
    <citation type="journal article" date="2003" name="Proc. Natl. Acad. Sci. U.S.A.">
        <title>Complete genome sequence and analysis of Wolinella succinogenes.</title>
        <authorList>
            <person name="Baar C."/>
            <person name="Eppinger M."/>
            <person name="Raddatz G."/>
            <person name="Simon J."/>
            <person name="Lanz C."/>
            <person name="Klimmek O."/>
            <person name="Nandakumar R."/>
            <person name="Gross R."/>
            <person name="Rosinus A."/>
            <person name="Keller H."/>
            <person name="Jagtap P."/>
            <person name="Linke B."/>
            <person name="Meyer F."/>
            <person name="Lederer H."/>
            <person name="Schuster S.C."/>
        </authorList>
    </citation>
    <scope>NUCLEOTIDE SEQUENCE [LARGE SCALE GENOMIC DNA]</scope>
    <source>
        <strain>ATCC 29543 / DSM 1740 / CCUG 13145 / JCM 31913 / LMG 7466 / NCTC 11488 / FDC 602W</strain>
    </source>
</reference>
<proteinExistence type="inferred from homology"/>
<accession>Q7MA70</accession>
<gene>
    <name evidence="1" type="primary">ruvA</name>
    <name type="ordered locus">WS0440</name>
</gene>
<sequence>MIVALKGNIEKKEPTRLWLEVGGVTYEIFISIHTSAALGEKEARLLITHLIREEAWSLYGFAEEAEKRVFDTLIKINGVGPKAALAILSTYTPPTFAQIIQAQDVKALQRVPGIGPKSAGRIMVELAGFSLSLQEGSKASTPPVFEESRLALESLGFKSELIAKALQNIQATTTQEIIKEALKKLQTLR</sequence>
<dbReference type="EMBL" id="BX571658">
    <property type="protein sequence ID" value="CAE09582.1"/>
    <property type="molecule type" value="Genomic_DNA"/>
</dbReference>
<dbReference type="RefSeq" id="WP_011138382.1">
    <property type="nucleotide sequence ID" value="NC_005090.1"/>
</dbReference>
<dbReference type="SMR" id="Q7MA70"/>
<dbReference type="STRING" id="273121.WS0440"/>
<dbReference type="KEGG" id="wsu:WS0440"/>
<dbReference type="eggNOG" id="COG0632">
    <property type="taxonomic scope" value="Bacteria"/>
</dbReference>
<dbReference type="HOGENOM" id="CLU_087936_3_1_7"/>
<dbReference type="Proteomes" id="UP000000422">
    <property type="component" value="Chromosome"/>
</dbReference>
<dbReference type="GO" id="GO:0005737">
    <property type="term" value="C:cytoplasm"/>
    <property type="evidence" value="ECO:0007669"/>
    <property type="project" value="UniProtKB-SubCell"/>
</dbReference>
<dbReference type="GO" id="GO:0009379">
    <property type="term" value="C:Holliday junction helicase complex"/>
    <property type="evidence" value="ECO:0007669"/>
    <property type="project" value="InterPro"/>
</dbReference>
<dbReference type="GO" id="GO:0048476">
    <property type="term" value="C:Holliday junction resolvase complex"/>
    <property type="evidence" value="ECO:0007669"/>
    <property type="project" value="UniProtKB-UniRule"/>
</dbReference>
<dbReference type="GO" id="GO:0005524">
    <property type="term" value="F:ATP binding"/>
    <property type="evidence" value="ECO:0007669"/>
    <property type="project" value="InterPro"/>
</dbReference>
<dbReference type="GO" id="GO:0000400">
    <property type="term" value="F:four-way junction DNA binding"/>
    <property type="evidence" value="ECO:0007669"/>
    <property type="project" value="UniProtKB-UniRule"/>
</dbReference>
<dbReference type="GO" id="GO:0009378">
    <property type="term" value="F:four-way junction helicase activity"/>
    <property type="evidence" value="ECO:0007669"/>
    <property type="project" value="InterPro"/>
</dbReference>
<dbReference type="GO" id="GO:0006310">
    <property type="term" value="P:DNA recombination"/>
    <property type="evidence" value="ECO:0007669"/>
    <property type="project" value="UniProtKB-UniRule"/>
</dbReference>
<dbReference type="GO" id="GO:0006281">
    <property type="term" value="P:DNA repair"/>
    <property type="evidence" value="ECO:0007669"/>
    <property type="project" value="UniProtKB-UniRule"/>
</dbReference>
<dbReference type="CDD" id="cd14332">
    <property type="entry name" value="UBA_RuvA_C"/>
    <property type="match status" value="1"/>
</dbReference>
<dbReference type="Gene3D" id="1.10.150.20">
    <property type="entry name" value="5' to 3' exonuclease, C-terminal subdomain"/>
    <property type="match status" value="1"/>
</dbReference>
<dbReference type="Gene3D" id="1.10.8.10">
    <property type="entry name" value="DNA helicase RuvA subunit, C-terminal domain"/>
    <property type="match status" value="1"/>
</dbReference>
<dbReference type="Gene3D" id="2.40.50.140">
    <property type="entry name" value="Nucleic acid-binding proteins"/>
    <property type="match status" value="1"/>
</dbReference>
<dbReference type="HAMAP" id="MF_00031">
    <property type="entry name" value="DNA_HJ_migration_RuvA"/>
    <property type="match status" value="1"/>
</dbReference>
<dbReference type="InterPro" id="IPR013849">
    <property type="entry name" value="DNA_helicase_Holl-junc_RuvA_I"/>
</dbReference>
<dbReference type="InterPro" id="IPR003583">
    <property type="entry name" value="Hlx-hairpin-Hlx_DNA-bd_motif"/>
</dbReference>
<dbReference type="InterPro" id="IPR012340">
    <property type="entry name" value="NA-bd_OB-fold"/>
</dbReference>
<dbReference type="InterPro" id="IPR000085">
    <property type="entry name" value="RuvA"/>
</dbReference>
<dbReference type="InterPro" id="IPR010994">
    <property type="entry name" value="RuvA_2-like"/>
</dbReference>
<dbReference type="InterPro" id="IPR011114">
    <property type="entry name" value="RuvA_C"/>
</dbReference>
<dbReference type="InterPro" id="IPR036267">
    <property type="entry name" value="RuvA_C_sf"/>
</dbReference>
<dbReference type="NCBIfam" id="TIGR00084">
    <property type="entry name" value="ruvA"/>
    <property type="match status" value="1"/>
</dbReference>
<dbReference type="Pfam" id="PF14520">
    <property type="entry name" value="HHH_5"/>
    <property type="match status" value="1"/>
</dbReference>
<dbReference type="Pfam" id="PF07499">
    <property type="entry name" value="RuvA_C"/>
    <property type="match status" value="1"/>
</dbReference>
<dbReference type="Pfam" id="PF01330">
    <property type="entry name" value="RuvA_N"/>
    <property type="match status" value="1"/>
</dbReference>
<dbReference type="SMART" id="SM00278">
    <property type="entry name" value="HhH1"/>
    <property type="match status" value="2"/>
</dbReference>
<dbReference type="SUPFAM" id="SSF46929">
    <property type="entry name" value="DNA helicase RuvA subunit, C-terminal domain"/>
    <property type="match status" value="1"/>
</dbReference>
<dbReference type="SUPFAM" id="SSF50249">
    <property type="entry name" value="Nucleic acid-binding proteins"/>
    <property type="match status" value="1"/>
</dbReference>
<dbReference type="SUPFAM" id="SSF47781">
    <property type="entry name" value="RuvA domain 2-like"/>
    <property type="match status" value="1"/>
</dbReference>
<name>RUVA_WOLSU</name>
<feature type="chain" id="PRO_0000094711" description="Holliday junction branch migration complex subunit RuvA">
    <location>
        <begin position="1"/>
        <end position="189"/>
    </location>
</feature>
<feature type="region of interest" description="Domain I" evidence="1">
    <location>
        <begin position="1"/>
        <end position="62"/>
    </location>
</feature>
<feature type="region of interest" description="Domain II" evidence="1">
    <location>
        <begin position="63"/>
        <end position="138"/>
    </location>
</feature>
<feature type="region of interest" description="Flexible linker" evidence="1">
    <location>
        <begin position="138"/>
        <end position="139"/>
    </location>
</feature>
<feature type="region of interest" description="Domain III" evidence="1">
    <location>
        <begin position="140"/>
        <end position="189"/>
    </location>
</feature>
<keyword id="KW-0963">Cytoplasm</keyword>
<keyword id="KW-0227">DNA damage</keyword>
<keyword id="KW-0233">DNA recombination</keyword>
<keyword id="KW-0234">DNA repair</keyword>
<keyword id="KW-0238">DNA-binding</keyword>
<keyword id="KW-1185">Reference proteome</keyword>
<comment type="function">
    <text evidence="1">The RuvA-RuvB-RuvC complex processes Holliday junction (HJ) DNA during genetic recombination and DNA repair, while the RuvA-RuvB complex plays an important role in the rescue of blocked DNA replication forks via replication fork reversal (RFR). RuvA specifically binds to HJ cruciform DNA, conferring on it an open structure. The RuvB hexamer acts as an ATP-dependent pump, pulling dsDNA into and through the RuvAB complex. HJ branch migration allows RuvC to scan DNA until it finds its consensus sequence, where it cleaves and resolves the cruciform DNA.</text>
</comment>
<comment type="subunit">
    <text evidence="1">Homotetramer. Forms an RuvA(8)-RuvB(12)-Holliday junction (HJ) complex. HJ DNA is sandwiched between 2 RuvA tetramers; dsDNA enters through RuvA and exits via RuvB. An RuvB hexamer assembles on each DNA strand where it exits the tetramer. Each RuvB hexamer is contacted by two RuvA subunits (via domain III) on 2 adjacent RuvB subunits; this complex drives branch migration. In the full resolvosome a probable DNA-RuvA(4)-RuvB(12)-RuvC(2) complex forms which resolves the HJ.</text>
</comment>
<comment type="subcellular location">
    <subcellularLocation>
        <location evidence="1">Cytoplasm</location>
    </subcellularLocation>
</comment>
<comment type="domain">
    <text evidence="1">Has three domains with a flexible linker between the domains II and III and assumes an 'L' shape. Domain III is highly mobile and contacts RuvB.</text>
</comment>
<comment type="similarity">
    <text evidence="1">Belongs to the RuvA family.</text>
</comment>
<evidence type="ECO:0000255" key="1">
    <source>
        <dbReference type="HAMAP-Rule" id="MF_00031"/>
    </source>
</evidence>
<protein>
    <recommendedName>
        <fullName evidence="1">Holliday junction branch migration complex subunit RuvA</fullName>
    </recommendedName>
</protein>